<organism>
    <name type="scientific">Medicago truncatula</name>
    <name type="common">Barrel medic</name>
    <name type="synonym">Medicago tribuloides</name>
    <dbReference type="NCBI Taxonomy" id="3880"/>
    <lineage>
        <taxon>Eukaryota</taxon>
        <taxon>Viridiplantae</taxon>
        <taxon>Streptophyta</taxon>
        <taxon>Embryophyta</taxon>
        <taxon>Tracheophyta</taxon>
        <taxon>Spermatophyta</taxon>
        <taxon>Magnoliopsida</taxon>
        <taxon>eudicotyledons</taxon>
        <taxon>Gunneridae</taxon>
        <taxon>Pentapetalae</taxon>
        <taxon>rosids</taxon>
        <taxon>fabids</taxon>
        <taxon>Fabales</taxon>
        <taxon>Fabaceae</taxon>
        <taxon>Papilionoideae</taxon>
        <taxon>50 kb inversion clade</taxon>
        <taxon>NPAAA clade</taxon>
        <taxon>Hologalegina</taxon>
        <taxon>IRL clade</taxon>
        <taxon>Trifolieae</taxon>
        <taxon>Medicago</taxon>
    </lineage>
</organism>
<proteinExistence type="evidence at protein level"/>
<comment type="function">
    <text evidence="1 7 8">Catalyzes the hydrolysis of L-arginine to urea and L-ornithine (Probable). The latter can be utilized in the urea cycle or as a precursor for the synthesis of both polyamines and proline (Probable). Possesses agmatinase activity. Catalyzes the formation of putrescine from agmatine (By similarity).</text>
</comment>
<comment type="catalytic activity">
    <reaction evidence="8">
        <text>L-arginine + H2O = urea + L-ornithine</text>
        <dbReference type="Rhea" id="RHEA:20569"/>
        <dbReference type="ChEBI" id="CHEBI:15377"/>
        <dbReference type="ChEBI" id="CHEBI:16199"/>
        <dbReference type="ChEBI" id="CHEBI:32682"/>
        <dbReference type="ChEBI" id="CHEBI:46911"/>
        <dbReference type="EC" id="3.5.3.1"/>
    </reaction>
</comment>
<comment type="catalytic activity">
    <reaction evidence="1">
        <text>agmatine + H2O = urea + putrescine</text>
        <dbReference type="Rhea" id="RHEA:13929"/>
        <dbReference type="ChEBI" id="CHEBI:15377"/>
        <dbReference type="ChEBI" id="CHEBI:16199"/>
        <dbReference type="ChEBI" id="CHEBI:58145"/>
        <dbReference type="ChEBI" id="CHEBI:326268"/>
        <dbReference type="EC" id="3.5.3.11"/>
    </reaction>
</comment>
<comment type="cofactor">
    <cofactor evidence="4 5">
        <name>Mn(2+)</name>
        <dbReference type="ChEBI" id="CHEBI:29035"/>
    </cofactor>
    <text evidence="4 5">Binds 2 manganese ions per subunit.</text>
</comment>
<comment type="pathway">
    <text evidence="7">Nitrogen metabolism; urea cycle; L-ornithine and urea from L-arginine: step 1/1.</text>
</comment>
<comment type="pathway">
    <text evidence="7">Amine and polyamine biosynthesis; putrescine biosynthesis via agmatine pathway; putrescine from agmatine: step 1/1.</text>
</comment>
<comment type="subunit">
    <text evidence="5">Forms homohexamers.</text>
</comment>
<comment type="subcellular location">
    <subcellularLocation>
        <location evidence="3">Mitochondrion</location>
    </subcellularLocation>
</comment>
<comment type="similarity">
    <text evidence="4">Belongs to the arginase family.</text>
</comment>
<sequence>MSTIARRGFHYMQRLNSANVSPALLEKAQNRVIDAALTFIRERAKFKGELMRSLGGVAATSSLLGVPLGHHSSFHEGSAFAPPRIREAIWCDSTNSTTEEGKNLRDPRVITNVGDVPIEEIRDCGVDDKRLANVISESVKLVMDEDPLRPLVLGGDHSISFPVVRAVSEKLGGAVDILHFDAHPDLYHDFEGNYYSHASPFARIMEGGYARRLVQVGIRSITNDVREQVKKYGVETHEMRTLSRDRPILENLKLGEGVKGVYVSIDVDSLDPSIAPGVSHHEPGGLLFRDILNILQNLQGDIVGGDVVEYNPQRDTYDGITALVAAKLVRELAAKMSK</sequence>
<evidence type="ECO:0000250" key="1">
    <source>
        <dbReference type="UniProtKB" id="P46637"/>
    </source>
</evidence>
<evidence type="ECO:0000250" key="2">
    <source>
        <dbReference type="UniProtKB" id="P53608"/>
    </source>
</evidence>
<evidence type="ECO:0000255" key="3"/>
<evidence type="ECO:0000255" key="4">
    <source>
        <dbReference type="PROSITE-ProRule" id="PRU00742"/>
    </source>
</evidence>
<evidence type="ECO:0000269" key="5">
    <source>
    </source>
</evidence>
<evidence type="ECO:0000303" key="6">
    <source>
    </source>
</evidence>
<evidence type="ECO:0000305" key="7"/>
<evidence type="ECO:0000305" key="8">
    <source>
    </source>
</evidence>
<evidence type="ECO:0000312" key="9">
    <source>
        <dbReference type="EMBL" id="AES87366.2"/>
    </source>
</evidence>
<evidence type="ECO:0000312" key="10">
    <source>
        <dbReference type="EMBL" id="RHN59278.1"/>
    </source>
</evidence>
<evidence type="ECO:0007829" key="11">
    <source>
        <dbReference type="PDB" id="6VSS"/>
    </source>
</evidence>
<evidence type="ECO:0007829" key="12">
    <source>
        <dbReference type="PDB" id="6VST"/>
    </source>
</evidence>
<reference key="1">
    <citation type="journal article" date="2011" name="Nature">
        <title>The Medicago genome provides insight into the evolution of rhizobial symbioses.</title>
        <authorList>
            <person name="Young N.D."/>
            <person name="Debelle F."/>
            <person name="Oldroyd G.E.D."/>
            <person name="Geurts R."/>
            <person name="Cannon S.B."/>
            <person name="Udvardi M.K."/>
            <person name="Benedito V.A."/>
            <person name="Mayer K.F.X."/>
            <person name="Gouzy J."/>
            <person name="Schoof H."/>
            <person name="Van de Peer Y."/>
            <person name="Proost S."/>
            <person name="Cook D.R."/>
            <person name="Meyers B.C."/>
            <person name="Spannagl M."/>
            <person name="Cheung F."/>
            <person name="De Mita S."/>
            <person name="Krishnakumar V."/>
            <person name="Gundlach H."/>
            <person name="Zhou S."/>
            <person name="Mudge J."/>
            <person name="Bharti A.K."/>
            <person name="Murray J.D."/>
            <person name="Naoumkina M.A."/>
            <person name="Rosen B."/>
            <person name="Silverstein K.A.T."/>
            <person name="Tang H."/>
            <person name="Rombauts S."/>
            <person name="Zhao P.X."/>
            <person name="Zhou P."/>
            <person name="Barbe V."/>
            <person name="Bardou P."/>
            <person name="Bechner M."/>
            <person name="Bellec A."/>
            <person name="Berger A."/>
            <person name="Berges H."/>
            <person name="Bidwell S."/>
            <person name="Bisseling T."/>
            <person name="Choisne N."/>
            <person name="Couloux A."/>
            <person name="Denny R."/>
            <person name="Deshpande S."/>
            <person name="Dai X."/>
            <person name="Doyle J.J."/>
            <person name="Dudez A.-M."/>
            <person name="Farmer A.D."/>
            <person name="Fouteau S."/>
            <person name="Franken C."/>
            <person name="Gibelin C."/>
            <person name="Gish J."/>
            <person name="Goldstein S."/>
            <person name="Gonzalez A.J."/>
            <person name="Green P.J."/>
            <person name="Hallab A."/>
            <person name="Hartog M."/>
            <person name="Hua A."/>
            <person name="Humphray S.J."/>
            <person name="Jeong D.-H."/>
            <person name="Jing Y."/>
            <person name="Jocker A."/>
            <person name="Kenton S.M."/>
            <person name="Kim D.-J."/>
            <person name="Klee K."/>
            <person name="Lai H."/>
            <person name="Lang C."/>
            <person name="Lin S."/>
            <person name="Macmil S.L."/>
            <person name="Magdelenat G."/>
            <person name="Matthews L."/>
            <person name="McCorrison J."/>
            <person name="Monaghan E.L."/>
            <person name="Mun J.-H."/>
            <person name="Najar F.Z."/>
            <person name="Nicholson C."/>
            <person name="Noirot C."/>
            <person name="O'Bleness M."/>
            <person name="Paule C.R."/>
            <person name="Poulain J."/>
            <person name="Prion F."/>
            <person name="Qin B."/>
            <person name="Qu C."/>
            <person name="Retzel E.F."/>
            <person name="Riddle C."/>
            <person name="Sallet E."/>
            <person name="Samain S."/>
            <person name="Samson N."/>
            <person name="Sanders I."/>
            <person name="Saurat O."/>
            <person name="Scarpelli C."/>
            <person name="Schiex T."/>
            <person name="Segurens B."/>
            <person name="Severin A.J."/>
            <person name="Sherrier D.J."/>
            <person name="Shi R."/>
            <person name="Sims S."/>
            <person name="Singer S.R."/>
            <person name="Sinharoy S."/>
            <person name="Sterck L."/>
            <person name="Viollet A."/>
            <person name="Wang B.-B."/>
            <person name="Wang K."/>
            <person name="Wang M."/>
            <person name="Wang X."/>
            <person name="Warfsmann J."/>
            <person name="Weissenbach J."/>
            <person name="White D.D."/>
            <person name="White J.D."/>
            <person name="Wiley G.B."/>
            <person name="Wincker P."/>
            <person name="Xing Y."/>
            <person name="Yang L."/>
            <person name="Yao Z."/>
            <person name="Ying F."/>
            <person name="Zhai J."/>
            <person name="Zhou L."/>
            <person name="Zuber A."/>
            <person name="Denarie J."/>
            <person name="Dixon R.A."/>
            <person name="May G.D."/>
            <person name="Schwartz D.C."/>
            <person name="Rogers J."/>
            <person name="Quetier F."/>
            <person name="Town C.D."/>
            <person name="Roe B.A."/>
        </authorList>
    </citation>
    <scope>NUCLEOTIDE SEQUENCE [LARGE SCALE GENOMIC DNA]</scope>
    <source>
        <strain>cv. Jemalong A17</strain>
    </source>
</reference>
<reference key="2">
    <citation type="journal article" date="2014" name="BMC Genomics">
        <title>An improved genome release (version Mt4.0) for the model legume Medicago truncatula.</title>
        <authorList>
            <person name="Tang H."/>
            <person name="Krishnakumar V."/>
            <person name="Bidwell S."/>
            <person name="Rosen B."/>
            <person name="Chan A."/>
            <person name="Zhou S."/>
            <person name="Gentzbittel L."/>
            <person name="Childs K.L."/>
            <person name="Yandell M."/>
            <person name="Gundlach H."/>
            <person name="Mayer K.F."/>
            <person name="Schwartz D.C."/>
            <person name="Town C.D."/>
        </authorList>
    </citation>
    <scope>GENOME REANNOTATION</scope>
    <source>
        <strain>cv. Jemalong A17</strain>
    </source>
</reference>
<reference key="3">
    <citation type="journal article" date="2018" name="Nat. Plants">
        <title>Whole-genome landscape of Medicago truncatula symbiotic genes.</title>
        <authorList>
            <person name="Pecrix Y."/>
            <person name="Staton S.E."/>
            <person name="Sallet E."/>
            <person name="Lelandais-Briere C."/>
            <person name="Moreau S."/>
            <person name="Carrere S."/>
            <person name="Blein T."/>
            <person name="Jardinaud M.F."/>
            <person name="Latrasse D."/>
            <person name="Zouine M."/>
            <person name="Zahm M."/>
            <person name="Kreplak J."/>
            <person name="Mayjonade B."/>
            <person name="Satge C."/>
            <person name="Perez M."/>
            <person name="Cauet S."/>
            <person name="Marande W."/>
            <person name="Chantry-Darmon C."/>
            <person name="Lopez-Roques C."/>
            <person name="Bouchez O."/>
            <person name="Berard A."/>
            <person name="Debelle F."/>
            <person name="Munos S."/>
            <person name="Bendahmane A."/>
            <person name="Berges H."/>
            <person name="Niebel A."/>
            <person name="Buitink J."/>
            <person name="Frugier F."/>
            <person name="Benhamed M."/>
            <person name="Crespi M."/>
            <person name="Gouzy J."/>
            <person name="Gamas P."/>
        </authorList>
    </citation>
    <scope>NUCLEOTIDE SEQUENCE [LARGE SCALE GENOMIC DNA]</scope>
    <source>
        <strain>cv. Jemalong A17</strain>
    </source>
</reference>
<reference key="4">
    <citation type="journal article" date="2020" name="Front. Plant Sci.">
        <title>The neighboring subunit is engaged to stabilize the substrate in the active site of plant arginases.</title>
        <authorList>
            <person name="Sekula B."/>
        </authorList>
    </citation>
    <scope>X-RAY CRYSTALLOGRAPHY (1.93 ANGSTROMS) IN COMPLEX WITH ORNITHINE AND MANGANESE IONS</scope>
    <scope>FUNCTION</scope>
    <scope>CATALYTIC ACTIVITY</scope>
    <scope>SUBUNIT</scope>
</reference>
<gene>
    <name evidence="6" type="primary">ARGAH</name>
    <name evidence="9" type="ordered locus">MTR_4g024960</name>
    <name evidence="10" type="ORF">MtrunA17_Chr4g0011501</name>
</gene>
<dbReference type="EC" id="3.5.3.1" evidence="8"/>
<dbReference type="EC" id="3.5.3.11" evidence="1"/>
<dbReference type="EMBL" id="CM001220">
    <property type="protein sequence ID" value="AES87366.2"/>
    <property type="molecule type" value="Genomic_DNA"/>
</dbReference>
<dbReference type="EMBL" id="PSQE01000004">
    <property type="protein sequence ID" value="RHN59278.1"/>
    <property type="molecule type" value="Genomic_DNA"/>
</dbReference>
<dbReference type="PDB" id="6VSS">
    <property type="method" value="X-ray"/>
    <property type="resolution" value="1.93 A"/>
    <property type="chains" value="A/B/C/D/E/F=1-338"/>
</dbReference>
<dbReference type="PDB" id="6VST">
    <property type="method" value="X-ray"/>
    <property type="resolution" value="2.12 A"/>
    <property type="chains" value="A/B/C/D/E/F/G/H/I/J/K/L=1-338"/>
</dbReference>
<dbReference type="PDBsum" id="6VSS"/>
<dbReference type="PDBsum" id="6VST"/>
<dbReference type="SMR" id="G7JFU5"/>
<dbReference type="STRING" id="3880.G7JFU5"/>
<dbReference type="PaxDb" id="3880-AES87366"/>
<dbReference type="EnsemblPlants" id="rna21282">
    <property type="protein sequence ID" value="RHN59278.1"/>
    <property type="gene ID" value="gene21282"/>
</dbReference>
<dbReference type="GeneID" id="11420737"/>
<dbReference type="Gramene" id="rna21282">
    <property type="protein sequence ID" value="RHN59278.1"/>
    <property type="gene ID" value="gene21282"/>
</dbReference>
<dbReference type="KEGG" id="mtr:11420737"/>
<dbReference type="eggNOG" id="KOG2964">
    <property type="taxonomic scope" value="Eukaryota"/>
</dbReference>
<dbReference type="HOGENOM" id="CLU_039478_3_0_1"/>
<dbReference type="OrthoDB" id="288726at2759"/>
<dbReference type="UniPathway" id="UPA00158">
    <property type="reaction ID" value="UER00270"/>
</dbReference>
<dbReference type="UniPathway" id="UPA00534">
    <property type="reaction ID" value="UER00287"/>
</dbReference>
<dbReference type="Proteomes" id="UP000002051">
    <property type="component" value="Chromosome 4"/>
</dbReference>
<dbReference type="Proteomes" id="UP000265566">
    <property type="component" value="Chromosome 4"/>
</dbReference>
<dbReference type="ExpressionAtlas" id="G7JFU5">
    <property type="expression patterns" value="differential"/>
</dbReference>
<dbReference type="GO" id="GO:0005739">
    <property type="term" value="C:mitochondrion"/>
    <property type="evidence" value="ECO:0007669"/>
    <property type="project" value="UniProtKB-SubCell"/>
</dbReference>
<dbReference type="GO" id="GO:0008783">
    <property type="term" value="F:agmatinase activity"/>
    <property type="evidence" value="ECO:0000318"/>
    <property type="project" value="GO_Central"/>
</dbReference>
<dbReference type="GO" id="GO:0004053">
    <property type="term" value="F:arginase activity"/>
    <property type="evidence" value="ECO:0000314"/>
    <property type="project" value="UniProtKB"/>
</dbReference>
<dbReference type="GO" id="GO:0046872">
    <property type="term" value="F:metal ion binding"/>
    <property type="evidence" value="ECO:0007669"/>
    <property type="project" value="UniProtKB-KW"/>
</dbReference>
<dbReference type="GO" id="GO:0019547">
    <property type="term" value="P:arginine catabolic process to ornithine"/>
    <property type="evidence" value="ECO:0000314"/>
    <property type="project" value="UniProtKB"/>
</dbReference>
<dbReference type="GO" id="GO:0034214">
    <property type="term" value="P:protein hexamerization"/>
    <property type="evidence" value="ECO:0000314"/>
    <property type="project" value="UniProtKB"/>
</dbReference>
<dbReference type="GO" id="GO:0033389">
    <property type="term" value="P:putrescine biosynthetic process from arginine, via agmatine"/>
    <property type="evidence" value="ECO:0000318"/>
    <property type="project" value="GO_Central"/>
</dbReference>
<dbReference type="GO" id="GO:0000050">
    <property type="term" value="P:urea cycle"/>
    <property type="evidence" value="ECO:0007669"/>
    <property type="project" value="UniProtKB-UniPathway"/>
</dbReference>
<dbReference type="CDD" id="cd11593">
    <property type="entry name" value="Agmatinase-like_2"/>
    <property type="match status" value="1"/>
</dbReference>
<dbReference type="FunFam" id="3.40.800.10:FF:000007">
    <property type="entry name" value="Arginase 1, mitochondrial"/>
    <property type="match status" value="1"/>
</dbReference>
<dbReference type="Gene3D" id="3.40.800.10">
    <property type="entry name" value="Ureohydrolase domain"/>
    <property type="match status" value="1"/>
</dbReference>
<dbReference type="InterPro" id="IPR006035">
    <property type="entry name" value="Ureohydrolase"/>
</dbReference>
<dbReference type="InterPro" id="IPR023696">
    <property type="entry name" value="Ureohydrolase_dom_sf"/>
</dbReference>
<dbReference type="InterPro" id="IPR020855">
    <property type="entry name" value="Ureohydrolase_Mn_BS"/>
</dbReference>
<dbReference type="PANTHER" id="PTHR11358">
    <property type="entry name" value="ARGINASE/AGMATINASE"/>
    <property type="match status" value="1"/>
</dbReference>
<dbReference type="PANTHER" id="PTHR11358:SF26">
    <property type="entry name" value="GUANIDINO ACID HYDROLASE, MITOCHONDRIAL"/>
    <property type="match status" value="1"/>
</dbReference>
<dbReference type="Pfam" id="PF00491">
    <property type="entry name" value="Arginase"/>
    <property type="match status" value="1"/>
</dbReference>
<dbReference type="PIRSF" id="PIRSF036979">
    <property type="entry name" value="Arginase"/>
    <property type="match status" value="1"/>
</dbReference>
<dbReference type="SUPFAM" id="SSF52768">
    <property type="entry name" value="Arginase/deacetylase"/>
    <property type="match status" value="1"/>
</dbReference>
<dbReference type="PROSITE" id="PS01053">
    <property type="entry name" value="ARGINASE_1"/>
    <property type="match status" value="1"/>
</dbReference>
<dbReference type="PROSITE" id="PS51409">
    <property type="entry name" value="ARGINASE_2"/>
    <property type="match status" value="1"/>
</dbReference>
<feature type="transit peptide" description="Mitochondrion" evidence="3">
    <location>
        <begin position="1"/>
        <end position="15"/>
    </location>
</feature>
<feature type="chain" id="PRO_0000451888" description="Arginase, mitochondrial">
    <location>
        <begin position="16"/>
        <end position="338"/>
    </location>
</feature>
<feature type="binding site" evidence="5">
    <location>
        <position position="73"/>
    </location>
    <ligand>
        <name>L-ornithine</name>
        <dbReference type="ChEBI" id="CHEBI:46911"/>
    </ligand>
</feature>
<feature type="binding site" evidence="5">
    <location>
        <begin position="92"/>
        <end position="95"/>
    </location>
    <ligand>
        <name>L-ornithine</name>
        <dbReference type="ChEBI" id="CHEBI:46911"/>
    </ligand>
</feature>
<feature type="binding site" evidence="4 5">
    <location>
        <position position="157"/>
    </location>
    <ligand>
        <name>Mn(2+)</name>
        <dbReference type="ChEBI" id="CHEBI:29035"/>
        <label>1</label>
    </ligand>
</feature>
<feature type="binding site" evidence="4 5">
    <location>
        <position position="181"/>
    </location>
    <ligand>
        <name>Mn(2+)</name>
        <dbReference type="ChEBI" id="CHEBI:29035"/>
        <label>1</label>
    </ligand>
</feature>
<feature type="binding site" evidence="4 5">
    <location>
        <position position="181"/>
    </location>
    <ligand>
        <name>Mn(2+)</name>
        <dbReference type="ChEBI" id="CHEBI:29035"/>
        <label>2</label>
    </ligand>
</feature>
<feature type="binding site" evidence="4 5">
    <location>
        <position position="183"/>
    </location>
    <ligand>
        <name>Mn(2+)</name>
        <dbReference type="ChEBI" id="CHEBI:29035"/>
        <label>2</label>
    </ligand>
</feature>
<feature type="binding site" evidence="5">
    <location>
        <begin position="185"/>
        <end position="187"/>
    </location>
    <ligand>
        <name>L-ornithine</name>
        <dbReference type="ChEBI" id="CHEBI:46911"/>
    </ligand>
</feature>
<feature type="binding site" evidence="4 5">
    <location>
        <position position="185"/>
    </location>
    <ligand>
        <name>Mn(2+)</name>
        <dbReference type="ChEBI" id="CHEBI:29035"/>
        <label>1</label>
    </ligand>
</feature>
<feature type="binding site" evidence="2">
    <location>
        <begin position="191"/>
        <end position="193"/>
    </location>
    <ligand>
        <name>substrate</name>
    </ligand>
</feature>
<feature type="binding site" evidence="5">
    <location>
        <position position="220"/>
    </location>
    <ligand>
        <name>L-ornithine</name>
        <dbReference type="ChEBI" id="CHEBI:46911"/>
    </ligand>
</feature>
<feature type="binding site" evidence="4 5">
    <location>
        <position position="266"/>
    </location>
    <ligand>
        <name>Mn(2+)</name>
        <dbReference type="ChEBI" id="CHEBI:29035"/>
        <label>1</label>
    </ligand>
</feature>
<feature type="binding site" evidence="4 5">
    <location>
        <position position="266"/>
    </location>
    <ligand>
        <name>Mn(2+)</name>
        <dbReference type="ChEBI" id="CHEBI:29035"/>
        <label>2</label>
    </ligand>
</feature>
<feature type="binding site" evidence="4 5">
    <location>
        <position position="268"/>
    </location>
    <ligand>
        <name>Mn(2+)</name>
        <dbReference type="ChEBI" id="CHEBI:29035"/>
        <label>2</label>
    </ligand>
</feature>
<feature type="binding site" evidence="8">
    <location>
        <position position="309"/>
    </location>
    <ligand>
        <name>substrate</name>
    </ligand>
</feature>
<feature type="helix" evidence="11">
    <location>
        <begin position="22"/>
        <end position="54"/>
    </location>
</feature>
<feature type="strand" evidence="11">
    <location>
        <begin position="58"/>
        <end position="66"/>
    </location>
</feature>
<feature type="helix" evidence="11">
    <location>
        <begin position="77"/>
        <end position="80"/>
    </location>
</feature>
<feature type="helix" evidence="11">
    <location>
        <begin position="81"/>
        <end position="90"/>
    </location>
</feature>
<feature type="turn" evidence="11">
    <location>
        <begin position="107"/>
        <end position="109"/>
    </location>
</feature>
<feature type="strand" evidence="11">
    <location>
        <begin position="110"/>
        <end position="115"/>
    </location>
</feature>
<feature type="helix" evidence="11">
    <location>
        <begin position="118"/>
        <end position="122"/>
    </location>
</feature>
<feature type="turn" evidence="11">
    <location>
        <begin position="123"/>
        <end position="125"/>
    </location>
</feature>
<feature type="helix" evidence="11">
    <location>
        <begin position="128"/>
        <end position="143"/>
    </location>
</feature>
<feature type="strand" evidence="11">
    <location>
        <begin position="148"/>
        <end position="156"/>
    </location>
</feature>
<feature type="helix" evidence="11">
    <location>
        <begin position="157"/>
        <end position="159"/>
    </location>
</feature>
<feature type="helix" evidence="11">
    <location>
        <begin position="160"/>
        <end position="171"/>
    </location>
</feature>
<feature type="strand" evidence="11">
    <location>
        <begin position="175"/>
        <end position="180"/>
    </location>
</feature>
<feature type="helix" evidence="11">
    <location>
        <begin position="200"/>
        <end position="206"/>
    </location>
</feature>
<feature type="strand" evidence="11">
    <location>
        <begin position="210"/>
        <end position="218"/>
    </location>
</feature>
<feature type="helix" evidence="11">
    <location>
        <begin position="223"/>
        <end position="232"/>
    </location>
</feature>
<feature type="strand" evidence="11">
    <location>
        <begin position="235"/>
        <end position="238"/>
    </location>
</feature>
<feature type="helix" evidence="11">
    <location>
        <begin position="239"/>
        <end position="241"/>
    </location>
</feature>
<feature type="helix" evidence="11">
    <location>
        <begin position="242"/>
        <end position="249"/>
    </location>
</feature>
<feature type="strand" evidence="11">
    <location>
        <begin position="261"/>
        <end position="266"/>
    </location>
</feature>
<feature type="helix" evidence="11">
    <location>
        <begin position="267"/>
        <end position="269"/>
    </location>
</feature>
<feature type="turn" evidence="11">
    <location>
        <begin position="272"/>
        <end position="274"/>
    </location>
</feature>
<feature type="strand" evidence="12">
    <location>
        <begin position="277"/>
        <end position="279"/>
    </location>
</feature>
<feature type="helix" evidence="11">
    <location>
        <begin position="288"/>
        <end position="297"/>
    </location>
</feature>
<feature type="strand" evidence="11">
    <location>
        <begin position="302"/>
        <end position="308"/>
    </location>
</feature>
<feature type="helix" evidence="11">
    <location>
        <begin position="312"/>
        <end position="314"/>
    </location>
</feature>
<feature type="helix" evidence="11">
    <location>
        <begin position="320"/>
        <end position="336"/>
    </location>
</feature>
<keyword id="KW-0002">3D-structure</keyword>
<keyword id="KW-0056">Arginine metabolism</keyword>
<keyword id="KW-0378">Hydrolase</keyword>
<keyword id="KW-0464">Manganese</keyword>
<keyword id="KW-0479">Metal-binding</keyword>
<keyword id="KW-0496">Mitochondrion</keyword>
<keyword id="KW-0661">Putrescine biosynthesis</keyword>
<keyword id="KW-1185">Reference proteome</keyword>
<keyword id="KW-0809">Transit peptide</keyword>
<accession>G7JFU5</accession>
<accession>A0A0C3WTP8</accession>
<protein>
    <recommendedName>
        <fullName>Arginase, mitochondrial</fullName>
        <ecNumber evidence="8">3.5.3.1</ecNumber>
    </recommendedName>
    <alternativeName>
        <fullName evidence="7">Agmatinase ARGAH</fullName>
        <ecNumber evidence="1">3.5.3.11</ecNumber>
    </alternativeName>
    <alternativeName>
        <fullName evidence="7">Arginine amidohydrolase</fullName>
        <shortName evidence="6">MtARGAH</shortName>
    </alternativeName>
</protein>
<name>ARGI_MEDTR</name>